<protein>
    <recommendedName>
        <fullName>DNA oxidative demethylase ALKBH2</fullName>
        <ecNumber>1.14.11.33</ecNumber>
    </recommendedName>
    <alternativeName>
        <fullName>Alkylated DNA repair protein alkB homolog 2</fullName>
    </alternativeName>
    <alternativeName>
        <fullName>Alpha-ketoglutarate-dependent dioxygenase alkB homolog 2</fullName>
    </alternativeName>
</protein>
<feature type="chain" id="PRO_0000426011" description="DNA oxidative demethylase ALKBH2">
    <location>
        <begin position="1"/>
        <end position="314"/>
    </location>
</feature>
<feature type="domain" description="Fe2OG dioxygenase" evidence="2">
    <location>
        <begin position="194"/>
        <end position="314"/>
    </location>
</feature>
<feature type="region of interest" description="Disordered" evidence="3">
    <location>
        <begin position="1"/>
        <end position="75"/>
    </location>
</feature>
<feature type="region of interest" description="Disordered" evidence="3">
    <location>
        <begin position="242"/>
        <end position="271"/>
    </location>
</feature>
<feature type="compositionally biased region" description="Polar residues" evidence="3">
    <location>
        <begin position="1"/>
        <end position="28"/>
    </location>
</feature>
<feature type="compositionally biased region" description="Basic and acidic residues" evidence="3">
    <location>
        <begin position="57"/>
        <end position="75"/>
    </location>
</feature>
<feature type="binding site" evidence="1">
    <location>
        <position position="132"/>
    </location>
    <ligand>
        <name>substrate</name>
    </ligand>
</feature>
<feature type="binding site" evidence="1">
    <location>
        <begin position="160"/>
        <end position="163"/>
    </location>
    <ligand>
        <name>substrate</name>
    </ligand>
</feature>
<feature type="binding site" evidence="1">
    <location>
        <begin position="201"/>
        <end position="203"/>
    </location>
    <ligand>
        <name>2-oxoglutarate</name>
        <dbReference type="ChEBI" id="CHEBI:16810"/>
    </ligand>
</feature>
<feature type="binding site" evidence="2">
    <location>
        <position position="213"/>
    </location>
    <ligand>
        <name>Fe cation</name>
        <dbReference type="ChEBI" id="CHEBI:24875"/>
        <note>catalytic</note>
    </ligand>
</feature>
<feature type="binding site" evidence="2">
    <location>
        <position position="215"/>
    </location>
    <ligand>
        <name>Fe cation</name>
        <dbReference type="ChEBI" id="CHEBI:24875"/>
        <note>catalytic</note>
    </ligand>
</feature>
<feature type="binding site" evidence="1">
    <location>
        <position position="216"/>
    </location>
    <ligand>
        <name>substrate</name>
    </ligand>
</feature>
<feature type="binding site" evidence="2">
    <location>
        <position position="293"/>
    </location>
    <ligand>
        <name>Fe cation</name>
        <dbReference type="ChEBI" id="CHEBI:24875"/>
        <note>catalytic</note>
    </ligand>
</feature>
<feature type="binding site" evidence="1">
    <location>
        <begin position="305"/>
        <end position="311"/>
    </location>
    <ligand>
        <name>2-oxoglutarate</name>
        <dbReference type="ChEBI" id="CHEBI:16810"/>
    </ligand>
</feature>
<feature type="binding site" evidence="2">
    <location>
        <position position="305"/>
    </location>
    <ligand>
        <name>2-oxoglutarate</name>
        <dbReference type="ChEBI" id="CHEBI:16810"/>
    </ligand>
</feature>
<feature type="sequence conflict" description="In Ref. 3; AY089037." evidence="5" ref="3">
    <original>V</original>
    <variation>A</variation>
    <location>
        <position position="189"/>
    </location>
</feature>
<sequence>MTNPLNSTAANRSNQPSSDGISDGQITNEEAESLINKKNCSGHKLKEVTDSDTFSDNGKDDSDTKKRFHYHQDQRRMSLTSIVAVESPSSSNAPSRKTIDLGHGSDLIYIQRFLPFQQSWTFFDYLDKHIPWTRPTIRVFGRSCLQPRDTCYVASSGLTALVYSGYRPTSYSWDDFPPLKEILDAIYKVLPGSRFNSLLLNRYKGASDYVAWHADDEKIYGPTPEIASVSFGCERDFVLKKKKDEESSQGKTGDSGPAKKRLKRSSREDQQSLTLKHGSLLVMRGYTQRDWIHSVPKRAKAEGTRINLTFRLVL</sequence>
<keyword id="KW-0223">Dioxygenase</keyword>
<keyword id="KW-0227">DNA damage</keyword>
<keyword id="KW-0234">DNA repair</keyword>
<keyword id="KW-0408">Iron</keyword>
<keyword id="KW-0479">Metal-binding</keyword>
<keyword id="KW-0539">Nucleus</keyword>
<keyword id="KW-0560">Oxidoreductase</keyword>
<keyword id="KW-1185">Reference proteome</keyword>
<name>ALKB2_ARATH</name>
<evidence type="ECO:0000250" key="1"/>
<evidence type="ECO:0000255" key="2">
    <source>
        <dbReference type="PROSITE-ProRule" id="PRU00805"/>
    </source>
</evidence>
<evidence type="ECO:0000256" key="3">
    <source>
        <dbReference type="SAM" id="MobiDB-lite"/>
    </source>
</evidence>
<evidence type="ECO:0000269" key="4">
    <source>
    </source>
</evidence>
<evidence type="ECO:0000305" key="5"/>
<dbReference type="EC" id="1.14.11.33"/>
<dbReference type="EMBL" id="AC007168">
    <property type="protein sequence ID" value="AAD23616.2"/>
    <property type="molecule type" value="Genomic_DNA"/>
</dbReference>
<dbReference type="EMBL" id="CP002685">
    <property type="protein sequence ID" value="AEC07286.1"/>
    <property type="molecule type" value="Genomic_DNA"/>
</dbReference>
<dbReference type="EMBL" id="CP002685">
    <property type="protein sequence ID" value="ANM62872.1"/>
    <property type="molecule type" value="Genomic_DNA"/>
</dbReference>
<dbReference type="EMBL" id="CP002685">
    <property type="protein sequence ID" value="ANM62873.1"/>
    <property type="molecule type" value="Genomic_DNA"/>
</dbReference>
<dbReference type="EMBL" id="CP002685">
    <property type="protein sequence ID" value="ANM62874.1"/>
    <property type="molecule type" value="Genomic_DNA"/>
</dbReference>
<dbReference type="EMBL" id="AY089037">
    <property type="status" value="NOT_ANNOTATED_CDS"/>
    <property type="molecule type" value="mRNA"/>
</dbReference>
<dbReference type="PIR" id="F84610">
    <property type="entry name" value="F84610"/>
</dbReference>
<dbReference type="RefSeq" id="NP_001324998.1">
    <property type="nucleotide sequence ID" value="NM_001335789.1"/>
</dbReference>
<dbReference type="RefSeq" id="NP_001324999.1">
    <property type="nucleotide sequence ID" value="NM_001335788.1"/>
</dbReference>
<dbReference type="RefSeq" id="NP_001325000.1">
    <property type="nucleotide sequence ID" value="NM_001335786.1"/>
</dbReference>
<dbReference type="RefSeq" id="NP_565530.1">
    <property type="nucleotide sequence ID" value="NM_127792.4"/>
</dbReference>
<dbReference type="SMR" id="Q9SIE0"/>
<dbReference type="FunCoup" id="Q9SIE0">
    <property type="interactions" value="1581"/>
</dbReference>
<dbReference type="STRING" id="3702.Q9SIE0"/>
<dbReference type="GlyGen" id="Q9SIE0">
    <property type="glycosylation" value="1 site"/>
</dbReference>
<dbReference type="PaxDb" id="3702-AT2G22260.1"/>
<dbReference type="ProteomicsDB" id="244955"/>
<dbReference type="DNASU" id="816759"/>
<dbReference type="EnsemblPlants" id="AT2G22260.1">
    <property type="protein sequence ID" value="AT2G22260.1"/>
    <property type="gene ID" value="AT2G22260"/>
</dbReference>
<dbReference type="EnsemblPlants" id="AT2G22260.2">
    <property type="protein sequence ID" value="AT2G22260.2"/>
    <property type="gene ID" value="AT2G22260"/>
</dbReference>
<dbReference type="EnsemblPlants" id="AT2G22260.4">
    <property type="protein sequence ID" value="AT2G22260.4"/>
    <property type="gene ID" value="AT2G22260"/>
</dbReference>
<dbReference type="EnsemblPlants" id="AT2G22260.5">
    <property type="protein sequence ID" value="AT2G22260.5"/>
    <property type="gene ID" value="AT2G22260"/>
</dbReference>
<dbReference type="GeneID" id="816759"/>
<dbReference type="Gramene" id="AT2G22260.1">
    <property type="protein sequence ID" value="AT2G22260.1"/>
    <property type="gene ID" value="AT2G22260"/>
</dbReference>
<dbReference type="Gramene" id="AT2G22260.2">
    <property type="protein sequence ID" value="AT2G22260.2"/>
    <property type="gene ID" value="AT2G22260"/>
</dbReference>
<dbReference type="Gramene" id="AT2G22260.4">
    <property type="protein sequence ID" value="AT2G22260.4"/>
    <property type="gene ID" value="AT2G22260"/>
</dbReference>
<dbReference type="Gramene" id="AT2G22260.5">
    <property type="protein sequence ID" value="AT2G22260.5"/>
    <property type="gene ID" value="AT2G22260"/>
</dbReference>
<dbReference type="KEGG" id="ath:AT2G22260"/>
<dbReference type="Araport" id="AT2G22260"/>
<dbReference type="TAIR" id="AT2G22260">
    <property type="gene designation" value="ALKBH2"/>
</dbReference>
<dbReference type="eggNOG" id="ENOG502QW9E">
    <property type="taxonomic scope" value="Eukaryota"/>
</dbReference>
<dbReference type="HOGENOM" id="CLU_048788_3_0_1"/>
<dbReference type="InParanoid" id="Q9SIE0"/>
<dbReference type="PhylomeDB" id="Q9SIE0"/>
<dbReference type="PRO" id="PR:Q9SIE0"/>
<dbReference type="Proteomes" id="UP000006548">
    <property type="component" value="Chromosome 2"/>
</dbReference>
<dbReference type="ExpressionAtlas" id="Q9SIE0">
    <property type="expression patterns" value="baseline and differential"/>
</dbReference>
<dbReference type="GO" id="GO:0005634">
    <property type="term" value="C:nucleus"/>
    <property type="evidence" value="ECO:0007669"/>
    <property type="project" value="UniProtKB-SubCell"/>
</dbReference>
<dbReference type="GO" id="GO:0035516">
    <property type="term" value="F:broad specificity oxidative DNA demethylase activity"/>
    <property type="evidence" value="ECO:0000314"/>
    <property type="project" value="GO_Central"/>
</dbReference>
<dbReference type="GO" id="GO:0035514">
    <property type="term" value="F:DNA demethylase activity"/>
    <property type="evidence" value="ECO:0000314"/>
    <property type="project" value="TAIR"/>
</dbReference>
<dbReference type="GO" id="GO:0046872">
    <property type="term" value="F:metal ion binding"/>
    <property type="evidence" value="ECO:0007669"/>
    <property type="project" value="UniProtKB-KW"/>
</dbReference>
<dbReference type="GO" id="GO:0006307">
    <property type="term" value="P:DNA alkylation repair"/>
    <property type="evidence" value="ECO:0000314"/>
    <property type="project" value="GO_Central"/>
</dbReference>
<dbReference type="GO" id="GO:0006281">
    <property type="term" value="P:DNA repair"/>
    <property type="evidence" value="ECO:0000314"/>
    <property type="project" value="TAIR"/>
</dbReference>
<dbReference type="FunFam" id="2.60.120.590:FF:000015">
    <property type="entry name" value="DNA oxidative demethylase ALKBH2"/>
    <property type="match status" value="1"/>
</dbReference>
<dbReference type="Gene3D" id="2.60.120.590">
    <property type="entry name" value="Alpha-ketoglutarate-dependent dioxygenase AlkB-like"/>
    <property type="match status" value="1"/>
</dbReference>
<dbReference type="InterPro" id="IPR027450">
    <property type="entry name" value="AlkB-like"/>
</dbReference>
<dbReference type="InterPro" id="IPR037151">
    <property type="entry name" value="AlkB-like_sf"/>
</dbReference>
<dbReference type="InterPro" id="IPR032852">
    <property type="entry name" value="ALKBH2"/>
</dbReference>
<dbReference type="InterPro" id="IPR025131">
    <property type="entry name" value="DUF4057"/>
</dbReference>
<dbReference type="InterPro" id="IPR005123">
    <property type="entry name" value="Oxoglu/Fe-dep_dioxygenase_dom"/>
</dbReference>
<dbReference type="PANTHER" id="PTHR31573">
    <property type="entry name" value="ALPHA-KETOGLUTARATE-DEPENDENT DIOXYGENASE ALKB HOMOLOG 2"/>
    <property type="match status" value="1"/>
</dbReference>
<dbReference type="PANTHER" id="PTHR31573:SF1">
    <property type="entry name" value="DNA OXIDATIVE DEMETHYLASE ALKBH2"/>
    <property type="match status" value="1"/>
</dbReference>
<dbReference type="Pfam" id="PF13532">
    <property type="entry name" value="2OG-FeII_Oxy_2"/>
    <property type="match status" value="1"/>
</dbReference>
<dbReference type="Pfam" id="PF13266">
    <property type="entry name" value="DUF4057"/>
    <property type="match status" value="1"/>
</dbReference>
<dbReference type="SUPFAM" id="SSF51197">
    <property type="entry name" value="Clavaminate synthase-like"/>
    <property type="match status" value="1"/>
</dbReference>
<dbReference type="PROSITE" id="PS51471">
    <property type="entry name" value="FE2OG_OXY"/>
    <property type="match status" value="1"/>
</dbReference>
<proteinExistence type="evidence at transcript level"/>
<gene>
    <name type="primary">ALKBH2</name>
    <name type="ordered locus">At2g22260</name>
    <name type="ORF">T26C19.8</name>
</gene>
<reference key="1">
    <citation type="journal article" date="1999" name="Nature">
        <title>Sequence and analysis of chromosome 2 of the plant Arabidopsis thaliana.</title>
        <authorList>
            <person name="Lin X."/>
            <person name="Kaul S."/>
            <person name="Rounsley S.D."/>
            <person name="Shea T.P."/>
            <person name="Benito M.-I."/>
            <person name="Town C.D."/>
            <person name="Fujii C.Y."/>
            <person name="Mason T.M."/>
            <person name="Bowman C.L."/>
            <person name="Barnstead M.E."/>
            <person name="Feldblyum T.V."/>
            <person name="Buell C.R."/>
            <person name="Ketchum K.A."/>
            <person name="Lee J.J."/>
            <person name="Ronning C.M."/>
            <person name="Koo H.L."/>
            <person name="Moffat K.S."/>
            <person name="Cronin L.A."/>
            <person name="Shen M."/>
            <person name="Pai G."/>
            <person name="Van Aken S."/>
            <person name="Umayam L."/>
            <person name="Tallon L.J."/>
            <person name="Gill J.E."/>
            <person name="Adams M.D."/>
            <person name="Carrera A.J."/>
            <person name="Creasy T.H."/>
            <person name="Goodman H.M."/>
            <person name="Somerville C.R."/>
            <person name="Copenhaver G.P."/>
            <person name="Preuss D."/>
            <person name="Nierman W.C."/>
            <person name="White O."/>
            <person name="Eisen J.A."/>
            <person name="Salzberg S.L."/>
            <person name="Fraser C.M."/>
            <person name="Venter J.C."/>
        </authorList>
    </citation>
    <scope>NUCLEOTIDE SEQUENCE [LARGE SCALE GENOMIC DNA]</scope>
    <source>
        <strain>cv. Columbia</strain>
    </source>
</reference>
<reference key="2">
    <citation type="journal article" date="2017" name="Plant J.">
        <title>Araport11: a complete reannotation of the Arabidopsis thaliana reference genome.</title>
        <authorList>
            <person name="Cheng C.Y."/>
            <person name="Krishnakumar V."/>
            <person name="Chan A.P."/>
            <person name="Thibaud-Nissen F."/>
            <person name="Schobel S."/>
            <person name="Town C.D."/>
        </authorList>
    </citation>
    <scope>GENOME REANNOTATION</scope>
    <source>
        <strain>cv. Columbia</strain>
    </source>
</reference>
<reference key="3">
    <citation type="submission" date="2002-03" db="EMBL/GenBank/DDBJ databases">
        <title>Full-length cDNA from Arabidopsis thaliana.</title>
        <authorList>
            <person name="Brover V.V."/>
            <person name="Troukhan M.E."/>
            <person name="Alexandrov N.A."/>
            <person name="Lu Y.-P."/>
            <person name="Flavell R.B."/>
            <person name="Feldmann K.A."/>
        </authorList>
    </citation>
    <scope>NUCLEOTIDE SEQUENCE [LARGE SCALE MRNA]</scope>
</reference>
<reference key="4">
    <citation type="journal article" date="2012" name="Nucleic Acids Res.">
        <title>The DNA dioxygenase ALKBH2 protects Arabidopsis thaliana against methylation damage.</title>
        <authorList>
            <person name="Meza T.J."/>
            <person name="Moen M.N."/>
            <person name="Vagbo C.B."/>
            <person name="Krokan H.E."/>
            <person name="Klungland A."/>
            <person name="Grini P.E."/>
            <person name="Falnes P.O."/>
        </authorList>
    </citation>
    <scope>FUNCTION</scope>
    <scope>DISRUPTION PHENOTYPE</scope>
    <scope>TISSUE SPECIFICITY</scope>
    <scope>DEVELOPMENTAL STAGE</scope>
    <source>
        <strain>cv. Columbia</strain>
        <strain>cv. Landsberg erecta</strain>
    </source>
</reference>
<organism>
    <name type="scientific">Arabidopsis thaliana</name>
    <name type="common">Mouse-ear cress</name>
    <dbReference type="NCBI Taxonomy" id="3702"/>
    <lineage>
        <taxon>Eukaryota</taxon>
        <taxon>Viridiplantae</taxon>
        <taxon>Streptophyta</taxon>
        <taxon>Embryophyta</taxon>
        <taxon>Tracheophyta</taxon>
        <taxon>Spermatophyta</taxon>
        <taxon>Magnoliopsida</taxon>
        <taxon>eudicotyledons</taxon>
        <taxon>Gunneridae</taxon>
        <taxon>Pentapetalae</taxon>
        <taxon>rosids</taxon>
        <taxon>malvids</taxon>
        <taxon>Brassicales</taxon>
        <taxon>Brassicaceae</taxon>
        <taxon>Camelineae</taxon>
        <taxon>Arabidopsis</taxon>
    </lineage>
</organism>
<accession>Q9SIE0</accession>
<comment type="function">
    <text evidence="4">Dioxygenase that repairs alkylated DNA containing 1-methyladenine and 1-ethenoadenine by oxidative demethylation. Accepts double-stranded and single-stranded substrates, with a preference for dsDNA over ssDNA. Confers resistance to methylating agents such as methylmethanesulphonate (MMS).</text>
</comment>
<comment type="catalytic activity">
    <reaction>
        <text>a methylated nucleobase within DNA + 2-oxoglutarate + O2 = a nucleobase within DNA + formaldehyde + succinate + CO2</text>
        <dbReference type="Rhea" id="RHEA:30299"/>
        <dbReference type="Rhea" id="RHEA-COMP:12192"/>
        <dbReference type="Rhea" id="RHEA-COMP:12193"/>
        <dbReference type="ChEBI" id="CHEBI:15379"/>
        <dbReference type="ChEBI" id="CHEBI:16526"/>
        <dbReference type="ChEBI" id="CHEBI:16810"/>
        <dbReference type="ChEBI" id="CHEBI:16842"/>
        <dbReference type="ChEBI" id="CHEBI:30031"/>
        <dbReference type="ChEBI" id="CHEBI:32875"/>
        <dbReference type="ChEBI" id="CHEBI:64428"/>
        <dbReference type="EC" id="1.14.11.33"/>
    </reaction>
</comment>
<comment type="cofactor">
    <cofactor evidence="2">
        <name>Fe(2+)</name>
        <dbReference type="ChEBI" id="CHEBI:29033"/>
    </cofactor>
    <text evidence="2">Binds 1 Fe(2+) ion per subunit.</text>
</comment>
<comment type="subcellular location">
    <subcellularLocation>
        <location evidence="1">Nucleus</location>
    </subcellularLocation>
</comment>
<comment type="tissue specificity">
    <text evidence="4">Expressed ubiquitously, including in seedlings, leaves and flowers.</text>
</comment>
<comment type="developmental stage">
    <text evidence="4">In seedlings, mostly present in the shoot meristematic region, as well as in the vasculature of the hypocotyl and root. Expressed in both primary and lateral root vasculature. In flowers, accumulates in sepals, stem, carpel tissue and anther filaments.</text>
</comment>
<comment type="disruption phenotype">
    <text evidence="4">Enhanced sensitivity to the methylating agent methylmethanesulphonate (MMS) leading to abnormal seedlings in presence of MMS.</text>
</comment>
<comment type="similarity">
    <text evidence="5">Belongs to the alkB family.</text>
</comment>
<comment type="sequence caution" evidence="5">
    <conflict type="frameshift">
        <sequence resource="EMBL" id="AY089037"/>
    </conflict>
</comment>